<protein>
    <recommendedName>
        <fullName evidence="1">Leucine--tRNA ligase</fullName>
        <ecNumber evidence="1">6.1.1.4</ecNumber>
    </recommendedName>
    <alternativeName>
        <fullName evidence="1">Leucyl-tRNA synthetase</fullName>
        <shortName evidence="1">LeuRS</shortName>
    </alternativeName>
</protein>
<evidence type="ECO:0000255" key="1">
    <source>
        <dbReference type="HAMAP-Rule" id="MF_00049"/>
    </source>
</evidence>
<comment type="catalytic activity">
    <reaction evidence="1">
        <text>tRNA(Leu) + L-leucine + ATP = L-leucyl-tRNA(Leu) + AMP + diphosphate</text>
        <dbReference type="Rhea" id="RHEA:11688"/>
        <dbReference type="Rhea" id="RHEA-COMP:9613"/>
        <dbReference type="Rhea" id="RHEA-COMP:9622"/>
        <dbReference type="ChEBI" id="CHEBI:30616"/>
        <dbReference type="ChEBI" id="CHEBI:33019"/>
        <dbReference type="ChEBI" id="CHEBI:57427"/>
        <dbReference type="ChEBI" id="CHEBI:78442"/>
        <dbReference type="ChEBI" id="CHEBI:78494"/>
        <dbReference type="ChEBI" id="CHEBI:456215"/>
        <dbReference type="EC" id="6.1.1.4"/>
    </reaction>
</comment>
<comment type="subcellular location">
    <subcellularLocation>
        <location evidence="1">Cytoplasm</location>
    </subcellularLocation>
</comment>
<comment type="similarity">
    <text evidence="1">Belongs to the class-I aminoacyl-tRNA synthetase family.</text>
</comment>
<name>SYL_COXB1</name>
<gene>
    <name evidence="1" type="primary">leuS</name>
    <name type="ordered locus">CbuK_1279</name>
</gene>
<reference key="1">
    <citation type="journal article" date="2009" name="Infect. Immun.">
        <title>Comparative genomics reveal extensive transposon-mediated genomic plasticity and diversity among potential effector proteins within the genus Coxiella.</title>
        <authorList>
            <person name="Beare P.A."/>
            <person name="Unsworth N."/>
            <person name="Andoh M."/>
            <person name="Voth D.E."/>
            <person name="Omsland A."/>
            <person name="Gilk S.D."/>
            <person name="Williams K.P."/>
            <person name="Sobral B.W."/>
            <person name="Kupko J.J. III"/>
            <person name="Porcella S.F."/>
            <person name="Samuel J.E."/>
            <person name="Heinzen R.A."/>
        </authorList>
    </citation>
    <scope>NUCLEOTIDE SEQUENCE [LARGE SCALE GENOMIC DNA]</scope>
    <source>
        <strain>CbuK_Q154</strain>
    </source>
</reference>
<organism>
    <name type="scientific">Coxiella burnetii (strain CbuK_Q154)</name>
    <name type="common">Coxiella burnetii (strain Q154)</name>
    <dbReference type="NCBI Taxonomy" id="434924"/>
    <lineage>
        <taxon>Bacteria</taxon>
        <taxon>Pseudomonadati</taxon>
        <taxon>Pseudomonadota</taxon>
        <taxon>Gammaproteobacteria</taxon>
        <taxon>Legionellales</taxon>
        <taxon>Coxiellaceae</taxon>
        <taxon>Coxiella</taxon>
    </lineage>
</organism>
<accession>B6J863</accession>
<proteinExistence type="inferred from homology"/>
<keyword id="KW-0030">Aminoacyl-tRNA synthetase</keyword>
<keyword id="KW-0067">ATP-binding</keyword>
<keyword id="KW-0963">Cytoplasm</keyword>
<keyword id="KW-0436">Ligase</keyword>
<keyword id="KW-0547">Nucleotide-binding</keyword>
<keyword id="KW-0648">Protein biosynthesis</keyword>
<sequence length="820" mass="94243">MNESYQPTLIEQLAQEYWEENETFEVKEDLSREKFYCLSMLPYPSGDLHMGHVRNYTIGDVIARYQIHKGRNVLQPMGWDAFGLPAENAAIQRELPPAEWTRKNIKKMRKQLKQLGFAYDWSREITTCDSTYYRWEQWLFLQLYKKGLAYKKNAIVNWDPVDQTVLANEQIVDGRGWRSGAVVERREISQWFLKITDYSEELLKDLDELKEWPEQVITMQRNWIGQSQGVIINFNLEKGPDKLQVYTTRPDTLMGVTYLAIAPEHPLAKERAKKSKKIAAFLKKCKQTRVAEADIATQEKEGIDSGLFAVHPLSKEKLPIWIANFVLMEYASGVVMAVPAHDERDHEFALKYDLPLKPVIEPADGHDWDYNQAAYTNPGKLINSGSFNDIDSKTAFNVIADYLKNNGAGSRQTHYRLRDWGISRQRYWGTPIPIIYCKTCGTVPVPENQLPVLLPEDIIPTGHGSPLKETASFYKTRCPVCNKPATRETDTMDTFVESSWYYARYSCPDQDKVMLDDRAKYWTPVDQYIGGIEHAVMHLLYARFMHKILRDLGLLNSNEPFIRLLTQGMVLKDGAKMSKSKGNVVTPQSLIKKYGADTVRLFIIFAAPPEQDLEWSDSGVEGAYRFLKKLWGFSYRIKDALLAINQQKERSNYQWEAPEHRQTRQQIHECLQQANIDMERLQFNTVVSAVMKILNILIKLTTDNDAEAHLIREGTGILLRLLSPITPHISHHLWQSLGFGGDILDAPWPRPDPKALQTTELELIVQINGKLRGRIQVPTEASKEIIESTALNQENVQRHLADKKIKKVIVVPKKLINILV</sequence>
<dbReference type="EC" id="6.1.1.4" evidence="1"/>
<dbReference type="EMBL" id="CP001020">
    <property type="protein sequence ID" value="ACJ20462.1"/>
    <property type="molecule type" value="Genomic_DNA"/>
</dbReference>
<dbReference type="RefSeq" id="WP_005771117.1">
    <property type="nucleotide sequence ID" value="NC_011528.1"/>
</dbReference>
<dbReference type="SMR" id="B6J863"/>
<dbReference type="KEGG" id="cbc:CbuK_1279"/>
<dbReference type="HOGENOM" id="CLU_004427_0_0_6"/>
<dbReference type="GO" id="GO:0005829">
    <property type="term" value="C:cytosol"/>
    <property type="evidence" value="ECO:0007669"/>
    <property type="project" value="TreeGrafter"/>
</dbReference>
<dbReference type="GO" id="GO:0002161">
    <property type="term" value="F:aminoacyl-tRNA deacylase activity"/>
    <property type="evidence" value="ECO:0007669"/>
    <property type="project" value="InterPro"/>
</dbReference>
<dbReference type="GO" id="GO:0005524">
    <property type="term" value="F:ATP binding"/>
    <property type="evidence" value="ECO:0007669"/>
    <property type="project" value="UniProtKB-UniRule"/>
</dbReference>
<dbReference type="GO" id="GO:0004823">
    <property type="term" value="F:leucine-tRNA ligase activity"/>
    <property type="evidence" value="ECO:0007669"/>
    <property type="project" value="UniProtKB-UniRule"/>
</dbReference>
<dbReference type="GO" id="GO:0006429">
    <property type="term" value="P:leucyl-tRNA aminoacylation"/>
    <property type="evidence" value="ECO:0007669"/>
    <property type="project" value="UniProtKB-UniRule"/>
</dbReference>
<dbReference type="CDD" id="cd07958">
    <property type="entry name" value="Anticodon_Ia_Leu_BEm"/>
    <property type="match status" value="1"/>
</dbReference>
<dbReference type="CDD" id="cd00812">
    <property type="entry name" value="LeuRS_core"/>
    <property type="match status" value="1"/>
</dbReference>
<dbReference type="FunFam" id="1.10.730.10:FF:000003">
    <property type="entry name" value="Leucine--tRNA ligase"/>
    <property type="match status" value="1"/>
</dbReference>
<dbReference type="FunFam" id="3.10.20.590:FF:000001">
    <property type="entry name" value="Leucine--tRNA ligase"/>
    <property type="match status" value="1"/>
</dbReference>
<dbReference type="FunFam" id="3.40.50.620:FF:000056">
    <property type="entry name" value="Leucine--tRNA ligase"/>
    <property type="match status" value="1"/>
</dbReference>
<dbReference type="FunFam" id="3.40.50.620:FF:000395">
    <property type="entry name" value="Leucine--tRNA ligase"/>
    <property type="match status" value="1"/>
</dbReference>
<dbReference type="FunFam" id="3.90.740.10:FF:000012">
    <property type="entry name" value="Leucine--tRNA ligase"/>
    <property type="match status" value="1"/>
</dbReference>
<dbReference type="Gene3D" id="3.10.20.590">
    <property type="match status" value="1"/>
</dbReference>
<dbReference type="Gene3D" id="3.40.50.620">
    <property type="entry name" value="HUPs"/>
    <property type="match status" value="2"/>
</dbReference>
<dbReference type="Gene3D" id="1.10.730.10">
    <property type="entry name" value="Isoleucyl-tRNA Synthetase, Domain 1"/>
    <property type="match status" value="1"/>
</dbReference>
<dbReference type="Gene3D" id="3.90.740.10">
    <property type="entry name" value="Valyl/Leucyl/Isoleucyl-tRNA synthetase, editing domain"/>
    <property type="match status" value="1"/>
</dbReference>
<dbReference type="HAMAP" id="MF_00049_B">
    <property type="entry name" value="Leu_tRNA_synth_B"/>
    <property type="match status" value="1"/>
</dbReference>
<dbReference type="InterPro" id="IPR001412">
    <property type="entry name" value="aa-tRNA-synth_I_CS"/>
</dbReference>
<dbReference type="InterPro" id="IPR002300">
    <property type="entry name" value="aa-tRNA-synth_Ia"/>
</dbReference>
<dbReference type="InterPro" id="IPR002302">
    <property type="entry name" value="Leu-tRNA-ligase"/>
</dbReference>
<dbReference type="InterPro" id="IPR025709">
    <property type="entry name" value="Leu_tRNA-synth_edit"/>
</dbReference>
<dbReference type="InterPro" id="IPR013155">
    <property type="entry name" value="M/V/L/I-tRNA-synth_anticd-bd"/>
</dbReference>
<dbReference type="InterPro" id="IPR015413">
    <property type="entry name" value="Methionyl/Leucyl_tRNA_Synth"/>
</dbReference>
<dbReference type="InterPro" id="IPR014729">
    <property type="entry name" value="Rossmann-like_a/b/a_fold"/>
</dbReference>
<dbReference type="InterPro" id="IPR009080">
    <property type="entry name" value="tRNAsynth_Ia_anticodon-bd"/>
</dbReference>
<dbReference type="InterPro" id="IPR009008">
    <property type="entry name" value="Val/Leu/Ile-tRNA-synth_edit"/>
</dbReference>
<dbReference type="NCBIfam" id="TIGR00396">
    <property type="entry name" value="leuS_bact"/>
    <property type="match status" value="1"/>
</dbReference>
<dbReference type="PANTHER" id="PTHR43740:SF2">
    <property type="entry name" value="LEUCINE--TRNA LIGASE, MITOCHONDRIAL"/>
    <property type="match status" value="1"/>
</dbReference>
<dbReference type="PANTHER" id="PTHR43740">
    <property type="entry name" value="LEUCYL-TRNA SYNTHETASE"/>
    <property type="match status" value="1"/>
</dbReference>
<dbReference type="Pfam" id="PF08264">
    <property type="entry name" value="Anticodon_1"/>
    <property type="match status" value="1"/>
</dbReference>
<dbReference type="Pfam" id="PF00133">
    <property type="entry name" value="tRNA-synt_1"/>
    <property type="match status" value="1"/>
</dbReference>
<dbReference type="Pfam" id="PF13603">
    <property type="entry name" value="tRNA-synt_1_2"/>
    <property type="match status" value="1"/>
</dbReference>
<dbReference type="Pfam" id="PF09334">
    <property type="entry name" value="tRNA-synt_1g"/>
    <property type="match status" value="1"/>
</dbReference>
<dbReference type="PRINTS" id="PR00985">
    <property type="entry name" value="TRNASYNTHLEU"/>
</dbReference>
<dbReference type="SUPFAM" id="SSF47323">
    <property type="entry name" value="Anticodon-binding domain of a subclass of class I aminoacyl-tRNA synthetases"/>
    <property type="match status" value="1"/>
</dbReference>
<dbReference type="SUPFAM" id="SSF52374">
    <property type="entry name" value="Nucleotidylyl transferase"/>
    <property type="match status" value="1"/>
</dbReference>
<dbReference type="SUPFAM" id="SSF50677">
    <property type="entry name" value="ValRS/IleRS/LeuRS editing domain"/>
    <property type="match status" value="1"/>
</dbReference>
<dbReference type="PROSITE" id="PS00178">
    <property type="entry name" value="AA_TRNA_LIGASE_I"/>
    <property type="match status" value="1"/>
</dbReference>
<feature type="chain" id="PRO_1000091309" description="Leucine--tRNA ligase">
    <location>
        <begin position="1"/>
        <end position="820"/>
    </location>
</feature>
<feature type="short sequence motif" description="'HIGH' region">
    <location>
        <begin position="42"/>
        <end position="52"/>
    </location>
</feature>
<feature type="short sequence motif" description="'KMSKS' region">
    <location>
        <begin position="576"/>
        <end position="580"/>
    </location>
</feature>
<feature type="binding site" evidence="1">
    <location>
        <position position="579"/>
    </location>
    <ligand>
        <name>ATP</name>
        <dbReference type="ChEBI" id="CHEBI:30616"/>
    </ligand>
</feature>